<keyword id="KW-0328">Glycosyltransferase</keyword>
<keyword id="KW-1185">Reference proteome</keyword>
<keyword id="KW-0808">Transferase</keyword>
<sequence>MSELISVVVPIYNTGKYLVECVEHILKQTYQNIEIILVDDGSTDNSGEICDAFMMQDNRVRVLHQENKGGAAQAKNMGISVAKGEYITIVDSDDIVKENMIETLYQQVQEKDADVVIGNYYNYDESDGNFYFYVTGQDFCVEELAIQEIMNRQAGDWKFNSSAFILPTFKLIKKELFNEVHFSNGRRFDDEATMHRFYLLASKIVFINDNLYLYRRRSGSIMRTEFDLSWARDIVEVFSKKISDCVLAGLDVSVLRIRFVNLLKDYKQTLEYHQLTDTEEYKDICFRLKLFFDAEQRNGKS</sequence>
<dbReference type="EMBL" id="AE005672">
    <property type="protein sequence ID" value="AAK75839.1"/>
    <property type="molecule type" value="Genomic_DNA"/>
</dbReference>
<dbReference type="RefSeq" id="WP_001292326.1">
    <property type="nucleotide sequence ID" value="NZ_CP155539.1"/>
</dbReference>
<dbReference type="SMR" id="A0A0H2UR96"/>
<dbReference type="PaxDb" id="170187-SP_1764"/>
<dbReference type="EnsemblBacteria" id="AAK75839">
    <property type="protein sequence ID" value="AAK75839"/>
    <property type="gene ID" value="SP_1764"/>
</dbReference>
<dbReference type="KEGG" id="spn:SP_1764"/>
<dbReference type="eggNOG" id="COG1215">
    <property type="taxonomic scope" value="Bacteria"/>
</dbReference>
<dbReference type="PhylomeDB" id="A0A0H2UR96"/>
<dbReference type="BioCyc" id="SPNE170187:G1FZB-1789-MONOMER"/>
<dbReference type="UniPathway" id="UPA00378"/>
<dbReference type="Proteomes" id="UP000000585">
    <property type="component" value="Chromosome"/>
</dbReference>
<dbReference type="GO" id="GO:0016757">
    <property type="term" value="F:glycosyltransferase activity"/>
    <property type="evidence" value="ECO:0007669"/>
    <property type="project" value="UniProtKB-KW"/>
</dbReference>
<dbReference type="GO" id="GO:0006486">
    <property type="term" value="P:protein glycosylation"/>
    <property type="evidence" value="ECO:0007669"/>
    <property type="project" value="UniProtKB-UniPathway"/>
</dbReference>
<dbReference type="CDD" id="cd00761">
    <property type="entry name" value="Glyco_tranf_GTA_type"/>
    <property type="match status" value="1"/>
</dbReference>
<dbReference type="Gene3D" id="3.90.550.10">
    <property type="entry name" value="Spore Coat Polysaccharide Biosynthesis Protein SpsA, Chain A"/>
    <property type="match status" value="1"/>
</dbReference>
<dbReference type="InterPro" id="IPR001173">
    <property type="entry name" value="Glyco_trans_2-like"/>
</dbReference>
<dbReference type="InterPro" id="IPR029044">
    <property type="entry name" value="Nucleotide-diphossugar_trans"/>
</dbReference>
<dbReference type="PANTHER" id="PTHR22916">
    <property type="entry name" value="GLYCOSYLTRANSFERASE"/>
    <property type="match status" value="1"/>
</dbReference>
<dbReference type="PANTHER" id="PTHR22916:SF51">
    <property type="entry name" value="GLYCOSYLTRANSFERASE EPSH-RELATED"/>
    <property type="match status" value="1"/>
</dbReference>
<dbReference type="Pfam" id="PF00535">
    <property type="entry name" value="Glycos_transf_2"/>
    <property type="match status" value="1"/>
</dbReference>
<dbReference type="SUPFAM" id="SSF53448">
    <property type="entry name" value="Nucleotide-diphospho-sugar transferases"/>
    <property type="match status" value="1"/>
</dbReference>
<name>GLYG_STRPN</name>
<protein>
    <recommendedName>
        <fullName evidence="4">Glycosyltransferase GlyG</fullName>
    </recommendedName>
    <alternativeName>
        <fullName evidence="5">PsrP glycosyltransferase GlyG</fullName>
    </alternativeName>
</protein>
<proteinExistence type="evidence at protein level"/>
<feature type="chain" id="PRO_0000447130" description="Glycosyltransferase GlyG">
    <location>
        <begin position="1"/>
        <end position="301"/>
    </location>
</feature>
<feature type="mutagenesis site" description="No longer transfers glucose to an acceptor protein." evidence="1">
    <original>D</original>
    <variation>A</variation>
    <location>
        <position position="93"/>
    </location>
</feature>
<organism>
    <name type="scientific">Streptococcus pneumoniae serotype 4 (strain ATCC BAA-334 / TIGR4)</name>
    <dbReference type="NCBI Taxonomy" id="170187"/>
    <lineage>
        <taxon>Bacteria</taxon>
        <taxon>Bacillati</taxon>
        <taxon>Bacillota</taxon>
        <taxon>Bacilli</taxon>
        <taxon>Lactobacillales</taxon>
        <taxon>Streptococcaceae</taxon>
        <taxon>Streptococcus</taxon>
    </lineage>
</organism>
<comment type="function">
    <text evidence="1">Involved in the polymorphic O-glycosylation of the serine-rich repeat protein PsrP. Catalyzes the third step in glycosylation PsrP in this bacteria. Transfers glucose from UDP-glucose to the terminal glucose moiety of already-glycosylated PsrP (using truncated substrates with PsrP SSR1-GlcNAc-Glc). Has a marked preference for PsrP substrate that has already been modified by GlcNAc and glucose. In vitro has hydrolytic activity against UDP-glucose and to a lesser extent against UDP-galactose.</text>
</comment>
<comment type="function">
    <text evidence="1">Also catalyzes the fourth step in glycosylation of the serine-rich repeat protein PsrP in this bacteria. Can transfer the sugar from UDP-glucose (and much less well from UDP-galactose) to the terminal sugar moiety of PsrP-GlcNAc-Glc-Gal or of PsrP-GlcNAc-Glc-Glc.</text>
</comment>
<comment type="pathway">
    <text evidence="1">Protein modification; protein glycosylation.</text>
</comment>
<comment type="miscellaneous">
    <text evidence="2 3 5">Encoded in RD10, a pathogenicity island with an atypical GC content that is associated with invasive pneumococcal disease. Pathogenicity islands account for greater than half the genomic diversity observed between isolates (PubMed:11463916, PubMed:16861665). The main function of this island seems to be correct synthesis and export of pneumococcal serine-rich repeat protein PsrP (Probable).</text>
</comment>
<comment type="similarity">
    <text evidence="5">Belongs to the glycosyltransferase 2 family.</text>
</comment>
<evidence type="ECO:0000269" key="1">
    <source>
    </source>
</evidence>
<evidence type="ECO:0000303" key="2">
    <source>
    </source>
</evidence>
<evidence type="ECO:0000303" key="3">
    <source>
    </source>
</evidence>
<evidence type="ECO:0000303" key="4">
    <source>
    </source>
</evidence>
<evidence type="ECO:0000305" key="5"/>
<gene>
    <name evidence="4" type="primary">glyG</name>
    <name type="ordered locus">SP_1764</name>
</gene>
<accession>A0A0H2UR96</accession>
<reference key="1">
    <citation type="journal article" date="2001" name="Science">
        <title>Complete genome sequence of a virulent isolate of Streptococcus pneumoniae.</title>
        <authorList>
            <person name="Tettelin H."/>
            <person name="Nelson K.E."/>
            <person name="Paulsen I.T."/>
            <person name="Eisen J.A."/>
            <person name="Read T.D."/>
            <person name="Peterson S.N."/>
            <person name="Heidelberg J.F."/>
            <person name="DeBoy R.T."/>
            <person name="Haft D.H."/>
            <person name="Dodson R.J."/>
            <person name="Durkin A.S."/>
            <person name="Gwinn M.L."/>
            <person name="Kolonay J.F."/>
            <person name="Nelson W.C."/>
            <person name="Peterson J.D."/>
            <person name="Umayam L.A."/>
            <person name="White O."/>
            <person name="Salzberg S.L."/>
            <person name="Lewis M.R."/>
            <person name="Radune D."/>
            <person name="Holtzapple E.K."/>
            <person name="Khouri H.M."/>
            <person name="Wolf A.M."/>
            <person name="Utterback T.R."/>
            <person name="Hansen C.L."/>
            <person name="McDonald L.A."/>
            <person name="Feldblyum T.V."/>
            <person name="Angiuoli S.V."/>
            <person name="Dickinson T."/>
            <person name="Hickey E.K."/>
            <person name="Holt I.E."/>
            <person name="Loftus B.J."/>
            <person name="Yang F."/>
            <person name="Smith H.O."/>
            <person name="Venter J.C."/>
            <person name="Dougherty B.A."/>
            <person name="Morrison D.A."/>
            <person name="Hollingshead S.K."/>
            <person name="Fraser C.M."/>
        </authorList>
    </citation>
    <scope>NUCLEOTIDE SEQUENCE [LARGE SCALE GENOMIC DNA]</scope>
    <source>
        <strain>ATCC BAA-334 / TIGR4</strain>
    </source>
</reference>
<reference key="2">
    <citation type="journal article" date="2006" name="Infect. Immun.">
        <title>Identification of a candidate Streptococcus pneumoniae core genome and regions of diversity correlated with invasive pneumococcal disease.</title>
        <authorList>
            <person name="Obert C."/>
            <person name="Sublett J."/>
            <person name="Kaushal D."/>
            <person name="Hinojosa E."/>
            <person name="Barton T."/>
            <person name="Tuomanen E.I."/>
            <person name="Orihuela C.J."/>
        </authorList>
    </citation>
    <scope>DISCUSSION OF SEQUENCE</scope>
    <source>
        <strain>ATCC BAA-334 / TIGR4</strain>
    </source>
</reference>
<reference key="3">
    <citation type="journal article" date="2017" name="J. Biol. Chem.">
        <title>Defining the enzymatic pathway for polymorphic O-glycosylation of the pneumococcal serine-rich repeat protein PsrP.</title>
        <authorList>
            <person name="Jiang Y.L."/>
            <person name="Jin H."/>
            <person name="Yang H.B."/>
            <person name="Zhao R.L."/>
            <person name="Wang S."/>
            <person name="Chen Y."/>
            <person name="Zhou C.Z."/>
        </authorList>
    </citation>
    <scope>FUNCTION</scope>
    <scope>PATHWAY</scope>
    <scope>MUTAGENESIS OF ASP-93</scope>
    <source>
        <strain>ATCC BAA-334 / TIGR4</strain>
    </source>
</reference>